<proteinExistence type="inferred from homology"/>
<reference key="1">
    <citation type="journal article" date="2007" name="PLoS ONE">
        <title>Molecular correlates of host specialization in Staphylococcus aureus.</title>
        <authorList>
            <person name="Herron-Olson L."/>
            <person name="Fitzgerald J.R."/>
            <person name="Musser J.M."/>
            <person name="Kapur V."/>
        </authorList>
    </citation>
    <scope>NUCLEOTIDE SEQUENCE [LARGE SCALE GENOMIC DNA]</scope>
    <source>
        <strain>bovine RF122 / ET3-1</strain>
    </source>
</reference>
<organism>
    <name type="scientific">Staphylococcus aureus (strain bovine RF122 / ET3-1)</name>
    <dbReference type="NCBI Taxonomy" id="273036"/>
    <lineage>
        <taxon>Bacteria</taxon>
        <taxon>Bacillati</taxon>
        <taxon>Bacillota</taxon>
        <taxon>Bacilli</taxon>
        <taxon>Bacillales</taxon>
        <taxon>Staphylococcaceae</taxon>
        <taxon>Staphylococcus</taxon>
    </lineage>
</organism>
<keyword id="KW-0460">Magnesium</keyword>
<keyword id="KW-0464">Manganese</keyword>
<keyword id="KW-0474">Menaquinone biosynthesis</keyword>
<keyword id="KW-0479">Metal-binding</keyword>
<keyword id="KW-0786">Thiamine pyrophosphate</keyword>
<keyword id="KW-0808">Transferase</keyword>
<protein>
    <recommendedName>
        <fullName evidence="1">2-succinyl-5-enolpyruvyl-6-hydroxy-3-cyclohexene-1-carboxylate synthase</fullName>
        <shortName evidence="1">SEPHCHC synthase</shortName>
        <ecNumber evidence="1">2.2.1.9</ecNumber>
    </recommendedName>
    <alternativeName>
        <fullName evidence="1">Menaquinone biosynthesis protein MenD</fullName>
    </alternativeName>
</protein>
<gene>
    <name evidence="1" type="primary">menD</name>
    <name type="ordered locus">SAB0910</name>
</gene>
<dbReference type="EC" id="2.2.1.9" evidence="1"/>
<dbReference type="EMBL" id="AJ938182">
    <property type="protein sequence ID" value="CAI80598.1"/>
    <property type="molecule type" value="Genomic_DNA"/>
</dbReference>
<dbReference type="RefSeq" id="WP_000526697.1">
    <property type="nucleotide sequence ID" value="NC_007622.1"/>
</dbReference>
<dbReference type="SMR" id="Q2YX30"/>
<dbReference type="KEGG" id="sab:SAB0910"/>
<dbReference type="HOGENOM" id="CLU_006051_3_0_9"/>
<dbReference type="UniPathway" id="UPA00079"/>
<dbReference type="UniPathway" id="UPA01057">
    <property type="reaction ID" value="UER00164"/>
</dbReference>
<dbReference type="GO" id="GO:0070204">
    <property type="term" value="F:2-succinyl-5-enolpyruvyl-6-hydroxy-3-cyclohexene-1-carboxylic-acid synthase activity"/>
    <property type="evidence" value="ECO:0007669"/>
    <property type="project" value="UniProtKB-UniRule"/>
</dbReference>
<dbReference type="GO" id="GO:0000287">
    <property type="term" value="F:magnesium ion binding"/>
    <property type="evidence" value="ECO:0007669"/>
    <property type="project" value="UniProtKB-UniRule"/>
</dbReference>
<dbReference type="GO" id="GO:0030145">
    <property type="term" value="F:manganese ion binding"/>
    <property type="evidence" value="ECO:0007669"/>
    <property type="project" value="UniProtKB-UniRule"/>
</dbReference>
<dbReference type="GO" id="GO:0030976">
    <property type="term" value="F:thiamine pyrophosphate binding"/>
    <property type="evidence" value="ECO:0007669"/>
    <property type="project" value="UniProtKB-UniRule"/>
</dbReference>
<dbReference type="GO" id="GO:0009234">
    <property type="term" value="P:menaquinone biosynthetic process"/>
    <property type="evidence" value="ECO:0007669"/>
    <property type="project" value="UniProtKB-UniRule"/>
</dbReference>
<dbReference type="CDD" id="cd07037">
    <property type="entry name" value="TPP_PYR_MenD"/>
    <property type="match status" value="1"/>
</dbReference>
<dbReference type="CDD" id="cd02009">
    <property type="entry name" value="TPP_SHCHC_synthase"/>
    <property type="match status" value="1"/>
</dbReference>
<dbReference type="Gene3D" id="3.40.50.970">
    <property type="match status" value="2"/>
</dbReference>
<dbReference type="Gene3D" id="3.40.50.1220">
    <property type="entry name" value="TPP-binding domain"/>
    <property type="match status" value="1"/>
</dbReference>
<dbReference type="HAMAP" id="MF_01659">
    <property type="entry name" value="MenD"/>
    <property type="match status" value="1"/>
</dbReference>
<dbReference type="InterPro" id="IPR004433">
    <property type="entry name" value="MenaQ_synth_MenD"/>
</dbReference>
<dbReference type="InterPro" id="IPR032264">
    <property type="entry name" value="MenD_middle"/>
</dbReference>
<dbReference type="InterPro" id="IPR029061">
    <property type="entry name" value="THDP-binding"/>
</dbReference>
<dbReference type="InterPro" id="IPR012001">
    <property type="entry name" value="Thiamin_PyroP_enz_TPP-bd_dom"/>
</dbReference>
<dbReference type="InterPro" id="IPR011766">
    <property type="entry name" value="TPP_enzyme_TPP-bd"/>
</dbReference>
<dbReference type="NCBIfam" id="TIGR00173">
    <property type="entry name" value="menD"/>
    <property type="match status" value="1"/>
</dbReference>
<dbReference type="PANTHER" id="PTHR42916">
    <property type="entry name" value="2-SUCCINYL-5-ENOLPYRUVYL-6-HYDROXY-3-CYCLOHEXENE-1-CARBOXYLATE SYNTHASE"/>
    <property type="match status" value="1"/>
</dbReference>
<dbReference type="PANTHER" id="PTHR42916:SF1">
    <property type="entry name" value="PROTEIN PHYLLO, CHLOROPLASTIC"/>
    <property type="match status" value="1"/>
</dbReference>
<dbReference type="Pfam" id="PF02775">
    <property type="entry name" value="TPP_enzyme_C"/>
    <property type="match status" value="1"/>
</dbReference>
<dbReference type="Pfam" id="PF16582">
    <property type="entry name" value="TPP_enzyme_M_2"/>
    <property type="match status" value="1"/>
</dbReference>
<dbReference type="Pfam" id="PF02776">
    <property type="entry name" value="TPP_enzyme_N"/>
    <property type="match status" value="1"/>
</dbReference>
<dbReference type="PIRSF" id="PIRSF004983">
    <property type="entry name" value="MenD"/>
    <property type="match status" value="1"/>
</dbReference>
<dbReference type="SUPFAM" id="SSF52518">
    <property type="entry name" value="Thiamin diphosphate-binding fold (THDP-binding)"/>
    <property type="match status" value="2"/>
</dbReference>
<name>MEND_STAAB</name>
<comment type="function">
    <text evidence="1">Catalyzes the thiamine diphosphate-dependent decarboxylation of 2-oxoglutarate and the subsequent addition of the resulting succinic semialdehyde-thiamine pyrophosphate anion to isochorismate to yield 2-succinyl-5-enolpyruvyl-6-hydroxy-3-cyclohexene-1-carboxylate (SEPHCHC).</text>
</comment>
<comment type="catalytic activity">
    <reaction evidence="1">
        <text>isochorismate + 2-oxoglutarate + H(+) = 5-enolpyruvoyl-6-hydroxy-2-succinyl-cyclohex-3-ene-1-carboxylate + CO2</text>
        <dbReference type="Rhea" id="RHEA:25593"/>
        <dbReference type="ChEBI" id="CHEBI:15378"/>
        <dbReference type="ChEBI" id="CHEBI:16526"/>
        <dbReference type="ChEBI" id="CHEBI:16810"/>
        <dbReference type="ChEBI" id="CHEBI:29780"/>
        <dbReference type="ChEBI" id="CHEBI:58818"/>
        <dbReference type="EC" id="2.2.1.9"/>
    </reaction>
</comment>
<comment type="cofactor">
    <cofactor evidence="1">
        <name>Mg(2+)</name>
        <dbReference type="ChEBI" id="CHEBI:18420"/>
    </cofactor>
    <cofactor evidence="1">
        <name>Mn(2+)</name>
        <dbReference type="ChEBI" id="CHEBI:29035"/>
    </cofactor>
</comment>
<comment type="cofactor">
    <cofactor evidence="1">
        <name>thiamine diphosphate</name>
        <dbReference type="ChEBI" id="CHEBI:58937"/>
    </cofactor>
    <text evidence="1">Binds 1 thiamine pyrophosphate per subunit.</text>
</comment>
<comment type="pathway">
    <text evidence="1">Quinol/quinone metabolism; 1,4-dihydroxy-2-naphthoate biosynthesis; 1,4-dihydroxy-2-naphthoate from chorismate: step 2/7.</text>
</comment>
<comment type="pathway">
    <text evidence="1">Quinol/quinone metabolism; menaquinone biosynthesis.</text>
</comment>
<comment type="subunit">
    <text evidence="1">Homodimer.</text>
</comment>
<comment type="similarity">
    <text evidence="1">Belongs to the TPP enzyme family. MenD subfamily.</text>
</comment>
<evidence type="ECO:0000255" key="1">
    <source>
        <dbReference type="HAMAP-Rule" id="MF_01659"/>
    </source>
</evidence>
<feature type="chain" id="PRO_0000341849" description="2-succinyl-5-enolpyruvyl-6-hydroxy-3-cyclohexene-1-carboxylate synthase">
    <location>
        <begin position="1"/>
        <end position="557"/>
    </location>
</feature>
<accession>Q2YX30</accession>
<sequence>MGNHKAALTKQVFTFASELYAYGVREVVISPGSRSTPLALAFEAHPNIKTWIHPDERSAAFFAVGLIKGSERPVAILCTSGTATANYTPAIAESQISRIPLIVLTSDRPHELRSVGAPQAINQVNMFNNYVSYEFDMPIADDSKETIDAIYYQMQIASQYLYGPHKGPIHFNLPFRDPLTPDLNATELLTSEMKILPHYQKSIDASALRHILNKKKGLIIVGDMQHQEVDQILTYSTIYDLPILADPLSHLRKFDHPNVICTYDLLFRSGLDLNVDFVIRVGKPVISKKLNQWLKKTDAFQILVQNNDKIDVFPIAPDISYEISANDFFRSLMEDTRVNRVSWLEKWQCIEKKGRKEIKCYLEQATDESAFVGELIKKTSEKDALFISNSMPIRDVDNLLLNKNIDVYANRGANGIDGIVSTALGMAVHKRITLLIGDLSFYHDMNGLLMSKLNNIQMNIVLLNNDGGGIFSYLPQKESATDYFERLFGTPTGLDFEYTAKLYQFDFKRFNSVSEFKNATLLSETSTIYELITNREDNFKQHQILYQKLSEMIHDTL</sequence>